<comment type="function">
    <text evidence="1">Hydrolyzes diadenosine 5',5'''-P1,P4-tetraphosphate to yield ADP.</text>
</comment>
<comment type="catalytic activity">
    <reaction evidence="1">
        <text>P(1),P(4)-bis(5'-adenosyl) tetraphosphate + H2O = 2 ADP + 2 H(+)</text>
        <dbReference type="Rhea" id="RHEA:24252"/>
        <dbReference type="ChEBI" id="CHEBI:15377"/>
        <dbReference type="ChEBI" id="CHEBI:15378"/>
        <dbReference type="ChEBI" id="CHEBI:58141"/>
        <dbReference type="ChEBI" id="CHEBI:456216"/>
        <dbReference type="EC" id="3.6.1.41"/>
    </reaction>
</comment>
<comment type="similarity">
    <text evidence="1">Belongs to the Ap4A hydrolase family.</text>
</comment>
<feature type="chain" id="PRO_1000124456" description="Bis(5'-nucleosyl)-tetraphosphatase, symmetrical">
    <location>
        <begin position="1"/>
        <end position="270"/>
    </location>
</feature>
<keyword id="KW-0378">Hydrolase</keyword>
<keyword id="KW-1185">Reference proteome</keyword>
<gene>
    <name evidence="1" type="primary">apaH</name>
    <name type="ordered locus">Tgr7_2728</name>
</gene>
<accession>B8GMY8</accession>
<name>APAH_THISH</name>
<proteinExistence type="inferred from homology"/>
<evidence type="ECO:0000255" key="1">
    <source>
        <dbReference type="HAMAP-Rule" id="MF_00199"/>
    </source>
</evidence>
<dbReference type="EC" id="3.6.1.41" evidence="1"/>
<dbReference type="EMBL" id="CP001339">
    <property type="protein sequence ID" value="ACL73803.1"/>
    <property type="molecule type" value="Genomic_DNA"/>
</dbReference>
<dbReference type="RefSeq" id="WP_012639278.1">
    <property type="nucleotide sequence ID" value="NC_011901.1"/>
</dbReference>
<dbReference type="SMR" id="B8GMY8"/>
<dbReference type="STRING" id="396588.Tgr7_2728"/>
<dbReference type="KEGG" id="tgr:Tgr7_2728"/>
<dbReference type="eggNOG" id="COG0639">
    <property type="taxonomic scope" value="Bacteria"/>
</dbReference>
<dbReference type="HOGENOM" id="CLU_056184_2_0_6"/>
<dbReference type="OrthoDB" id="9807890at2"/>
<dbReference type="Proteomes" id="UP000002383">
    <property type="component" value="Chromosome"/>
</dbReference>
<dbReference type="GO" id="GO:0008803">
    <property type="term" value="F:bis(5'-nucleosyl)-tetraphosphatase (symmetrical) activity"/>
    <property type="evidence" value="ECO:0007669"/>
    <property type="project" value="UniProtKB-UniRule"/>
</dbReference>
<dbReference type="CDD" id="cd07422">
    <property type="entry name" value="MPP_ApaH"/>
    <property type="match status" value="1"/>
</dbReference>
<dbReference type="Gene3D" id="3.60.21.10">
    <property type="match status" value="1"/>
</dbReference>
<dbReference type="HAMAP" id="MF_00199">
    <property type="entry name" value="ApaH"/>
    <property type="match status" value="1"/>
</dbReference>
<dbReference type="InterPro" id="IPR004617">
    <property type="entry name" value="ApaH"/>
</dbReference>
<dbReference type="InterPro" id="IPR004843">
    <property type="entry name" value="Calcineurin-like_PHP_ApaH"/>
</dbReference>
<dbReference type="InterPro" id="IPR029052">
    <property type="entry name" value="Metallo-depent_PP-like"/>
</dbReference>
<dbReference type="NCBIfam" id="TIGR00668">
    <property type="entry name" value="apaH"/>
    <property type="match status" value="1"/>
</dbReference>
<dbReference type="NCBIfam" id="NF001204">
    <property type="entry name" value="PRK00166.1"/>
    <property type="match status" value="1"/>
</dbReference>
<dbReference type="PANTHER" id="PTHR40942">
    <property type="match status" value="1"/>
</dbReference>
<dbReference type="PANTHER" id="PTHR40942:SF4">
    <property type="entry name" value="CYTOCHROME C5"/>
    <property type="match status" value="1"/>
</dbReference>
<dbReference type="Pfam" id="PF00149">
    <property type="entry name" value="Metallophos"/>
    <property type="match status" value="1"/>
</dbReference>
<dbReference type="PIRSF" id="PIRSF000903">
    <property type="entry name" value="B5n-ttraPtase_sm"/>
    <property type="match status" value="1"/>
</dbReference>
<dbReference type="SUPFAM" id="SSF56300">
    <property type="entry name" value="Metallo-dependent phosphatases"/>
    <property type="match status" value="1"/>
</dbReference>
<sequence length="270" mass="30483">MSIYAVGDLQGCLTPLKRLLEQVRFDPAADQLWLVGDLVNRGPESLEALRFVRDLGDAAITVLGNHDLHLLAIHQGVHKVRRKDTVQPILDAPDRAELMDWLRHRPLLHHDPRIQWTLLHAGLPPQWDLAMARACASEVETVLRGPDHPTLLERMYGDEPDQWSESLQGWARLRFITNCFTRLRYCTADGSVDMAYKGAPGGQLPHLMPWFAVPGRRSVGTRIVFGHWSTLGLYQGDDVLCLDTGCVWGQRMTLARLDSSALETMHTRCE</sequence>
<reference key="1">
    <citation type="journal article" date="2011" name="Stand. Genomic Sci.">
        <title>Complete genome sequence of 'Thioalkalivibrio sulfidophilus' HL-EbGr7.</title>
        <authorList>
            <person name="Muyzer G."/>
            <person name="Sorokin D.Y."/>
            <person name="Mavromatis K."/>
            <person name="Lapidus A."/>
            <person name="Clum A."/>
            <person name="Ivanova N."/>
            <person name="Pati A."/>
            <person name="d'Haeseleer P."/>
            <person name="Woyke T."/>
            <person name="Kyrpides N.C."/>
        </authorList>
    </citation>
    <scope>NUCLEOTIDE SEQUENCE [LARGE SCALE GENOMIC DNA]</scope>
    <source>
        <strain>HL-EbGR7</strain>
    </source>
</reference>
<organism>
    <name type="scientific">Thioalkalivibrio sulfidiphilus (strain HL-EbGR7)</name>
    <dbReference type="NCBI Taxonomy" id="396588"/>
    <lineage>
        <taxon>Bacteria</taxon>
        <taxon>Pseudomonadati</taxon>
        <taxon>Pseudomonadota</taxon>
        <taxon>Gammaproteobacteria</taxon>
        <taxon>Chromatiales</taxon>
        <taxon>Ectothiorhodospiraceae</taxon>
        <taxon>Thioalkalivibrio</taxon>
    </lineage>
</organism>
<protein>
    <recommendedName>
        <fullName evidence="1">Bis(5'-nucleosyl)-tetraphosphatase, symmetrical</fullName>
        <ecNumber evidence="1">3.6.1.41</ecNumber>
    </recommendedName>
    <alternativeName>
        <fullName evidence="1">Ap4A hydrolase</fullName>
    </alternativeName>
    <alternativeName>
        <fullName evidence="1">Diadenosine 5',5'''-P1,P4-tetraphosphate pyrophosphohydrolase</fullName>
    </alternativeName>
    <alternativeName>
        <fullName evidence="1">Diadenosine tetraphosphatase</fullName>
    </alternativeName>
</protein>